<reference key="1">
    <citation type="journal article" date="2007" name="Proc. Natl. Acad. Sci. U.S.A.">
        <title>Genome sequencing reveals complex secondary metabolome in the marine actinomycete Salinispora tropica.</title>
        <authorList>
            <person name="Udwary D.W."/>
            <person name="Zeigler L."/>
            <person name="Asolkar R.N."/>
            <person name="Singan V."/>
            <person name="Lapidus A."/>
            <person name="Fenical W."/>
            <person name="Jensen P.R."/>
            <person name="Moore B.S."/>
        </authorList>
    </citation>
    <scope>NUCLEOTIDE SEQUENCE [LARGE SCALE GENOMIC DNA]</scope>
    <source>
        <strain>ATCC BAA-916 / DSM 44818 / JCM 13857 / NBRC 105044 / CNB-440</strain>
    </source>
</reference>
<evidence type="ECO:0000255" key="1">
    <source>
        <dbReference type="HAMAP-Rule" id="MF_00137"/>
    </source>
</evidence>
<feature type="chain" id="PRO_1000122928" description="Phosphoribosylaminoimidazole-succinocarboxamide synthase">
    <location>
        <begin position="1"/>
        <end position="277"/>
    </location>
</feature>
<comment type="catalytic activity">
    <reaction evidence="1">
        <text>5-amino-1-(5-phospho-D-ribosyl)imidazole-4-carboxylate + L-aspartate + ATP = (2S)-2-[5-amino-1-(5-phospho-beta-D-ribosyl)imidazole-4-carboxamido]succinate + ADP + phosphate + 2 H(+)</text>
        <dbReference type="Rhea" id="RHEA:22628"/>
        <dbReference type="ChEBI" id="CHEBI:15378"/>
        <dbReference type="ChEBI" id="CHEBI:29991"/>
        <dbReference type="ChEBI" id="CHEBI:30616"/>
        <dbReference type="ChEBI" id="CHEBI:43474"/>
        <dbReference type="ChEBI" id="CHEBI:58443"/>
        <dbReference type="ChEBI" id="CHEBI:77657"/>
        <dbReference type="ChEBI" id="CHEBI:456216"/>
        <dbReference type="EC" id="6.3.2.6"/>
    </reaction>
</comment>
<comment type="pathway">
    <text evidence="1">Purine metabolism; IMP biosynthesis via de novo pathway; 5-amino-1-(5-phospho-D-ribosyl)imidazole-4-carboxamide from 5-amino-1-(5-phospho-D-ribosyl)imidazole-4-carboxylate: step 1/2.</text>
</comment>
<comment type="similarity">
    <text evidence="1">Belongs to the SAICAR synthetase family.</text>
</comment>
<dbReference type="EC" id="6.3.2.6" evidence="1"/>
<dbReference type="EMBL" id="CP000667">
    <property type="protein sequence ID" value="ABP56157.1"/>
    <property type="molecule type" value="Genomic_DNA"/>
</dbReference>
<dbReference type="RefSeq" id="WP_012014932.1">
    <property type="nucleotide sequence ID" value="NC_009380.1"/>
</dbReference>
<dbReference type="SMR" id="A4XB58"/>
<dbReference type="STRING" id="369723.Strop_3726"/>
<dbReference type="KEGG" id="stp:Strop_3726"/>
<dbReference type="PATRIC" id="fig|369723.5.peg.3842"/>
<dbReference type="eggNOG" id="COG0152">
    <property type="taxonomic scope" value="Bacteria"/>
</dbReference>
<dbReference type="HOGENOM" id="CLU_045637_0_0_11"/>
<dbReference type="UniPathway" id="UPA00074">
    <property type="reaction ID" value="UER00131"/>
</dbReference>
<dbReference type="Proteomes" id="UP000000235">
    <property type="component" value="Chromosome"/>
</dbReference>
<dbReference type="GO" id="GO:0005737">
    <property type="term" value="C:cytoplasm"/>
    <property type="evidence" value="ECO:0007669"/>
    <property type="project" value="TreeGrafter"/>
</dbReference>
<dbReference type="GO" id="GO:0005524">
    <property type="term" value="F:ATP binding"/>
    <property type="evidence" value="ECO:0007669"/>
    <property type="project" value="UniProtKB-KW"/>
</dbReference>
<dbReference type="GO" id="GO:0004639">
    <property type="term" value="F:phosphoribosylaminoimidazolesuccinocarboxamide synthase activity"/>
    <property type="evidence" value="ECO:0007669"/>
    <property type="project" value="UniProtKB-UniRule"/>
</dbReference>
<dbReference type="GO" id="GO:0006189">
    <property type="term" value="P:'de novo' IMP biosynthetic process"/>
    <property type="evidence" value="ECO:0007669"/>
    <property type="project" value="UniProtKB-UniRule"/>
</dbReference>
<dbReference type="CDD" id="cd01414">
    <property type="entry name" value="SAICAR_synt_Sc"/>
    <property type="match status" value="1"/>
</dbReference>
<dbReference type="Gene3D" id="3.30.470.20">
    <property type="entry name" value="ATP-grasp fold, B domain"/>
    <property type="match status" value="1"/>
</dbReference>
<dbReference type="Gene3D" id="3.30.200.20">
    <property type="entry name" value="Phosphorylase Kinase, domain 1"/>
    <property type="match status" value="1"/>
</dbReference>
<dbReference type="HAMAP" id="MF_00137">
    <property type="entry name" value="SAICAR_synth"/>
    <property type="match status" value="1"/>
</dbReference>
<dbReference type="InterPro" id="IPR028923">
    <property type="entry name" value="SAICAR_synt/ADE2_N"/>
</dbReference>
<dbReference type="InterPro" id="IPR001636">
    <property type="entry name" value="SAICAR_synth"/>
</dbReference>
<dbReference type="NCBIfam" id="NF010568">
    <property type="entry name" value="PRK13961.1"/>
    <property type="match status" value="1"/>
</dbReference>
<dbReference type="NCBIfam" id="TIGR00081">
    <property type="entry name" value="purC"/>
    <property type="match status" value="1"/>
</dbReference>
<dbReference type="PANTHER" id="PTHR43700">
    <property type="entry name" value="PHOSPHORIBOSYLAMINOIMIDAZOLE-SUCCINOCARBOXAMIDE SYNTHASE"/>
    <property type="match status" value="1"/>
</dbReference>
<dbReference type="PANTHER" id="PTHR43700:SF1">
    <property type="entry name" value="PHOSPHORIBOSYLAMINOIMIDAZOLE-SUCCINOCARBOXAMIDE SYNTHASE"/>
    <property type="match status" value="1"/>
</dbReference>
<dbReference type="Pfam" id="PF01259">
    <property type="entry name" value="SAICAR_synt"/>
    <property type="match status" value="1"/>
</dbReference>
<dbReference type="SUPFAM" id="SSF56104">
    <property type="entry name" value="SAICAR synthase-like"/>
    <property type="match status" value="1"/>
</dbReference>
<gene>
    <name evidence="1" type="primary">purC</name>
    <name type="ordered locus">Strop_3726</name>
</gene>
<accession>A4XB58</accession>
<organism>
    <name type="scientific">Salinispora tropica (strain ATCC BAA-916 / DSM 44818 / JCM 13857 / NBRC 105044 / CNB-440)</name>
    <dbReference type="NCBI Taxonomy" id="369723"/>
    <lineage>
        <taxon>Bacteria</taxon>
        <taxon>Bacillati</taxon>
        <taxon>Actinomycetota</taxon>
        <taxon>Actinomycetes</taxon>
        <taxon>Micromonosporales</taxon>
        <taxon>Micromonosporaceae</taxon>
        <taxon>Salinispora</taxon>
    </lineage>
</organism>
<proteinExistence type="inferred from homology"/>
<keyword id="KW-0067">ATP-binding</keyword>
<keyword id="KW-0436">Ligase</keyword>
<keyword id="KW-0547">Nucleotide-binding</keyword>
<keyword id="KW-0658">Purine biosynthesis</keyword>
<keyword id="KW-1185">Reference proteome</keyword>
<protein>
    <recommendedName>
        <fullName evidence="1">Phosphoribosylaminoimidazole-succinocarboxamide synthase</fullName>
        <ecNumber evidence="1">6.3.2.6</ecNumber>
    </recommendedName>
    <alternativeName>
        <fullName evidence="1">SAICAR synthetase</fullName>
    </alternativeName>
</protein>
<name>PUR7_SALTO</name>
<sequence>MELLHSGKVRDVYADGDDLILVASDRVSVYDVVLPTPIPEKGKLLTALSLWWFDQLAELVPNHVLSATDVPVELAGRAIRCRRLEMVPVECVARGYLVGGGFAEYQRTGVVSGIELPRGMVEAAALPEPIFTPSTKAPVGEHDQPMTFGEVVDKVGAETAERLRQITLDVYRRGAELAADRGILIADTKIELGWAADGTLTVGDELLTSDSSRFWPAESYQPGRAQFSYDKQYVRDWATRSGWDRRSPAPEVPDEVVDATRARYVDVYERLTGERWG</sequence>